<feature type="chain" id="PRO_0000229099" description="1-(5-phosphoribosyl)-5-[(5-phosphoribosylamino)methylideneamino] imidazole-4-carboxamide isomerase">
    <location>
        <begin position="1"/>
        <end position="245"/>
    </location>
</feature>
<feature type="active site" description="Proton acceptor" evidence="1">
    <location>
        <position position="10"/>
    </location>
</feature>
<feature type="active site" description="Proton donor" evidence="1">
    <location>
        <position position="135"/>
    </location>
</feature>
<name>HIS4_METBF</name>
<accession>Q46CW8</accession>
<comment type="catalytic activity">
    <reaction evidence="1">
        <text>1-(5-phospho-beta-D-ribosyl)-5-[(5-phospho-beta-D-ribosylamino)methylideneamino]imidazole-4-carboxamide = 5-[(5-phospho-1-deoxy-D-ribulos-1-ylimino)methylamino]-1-(5-phospho-beta-D-ribosyl)imidazole-4-carboxamide</text>
        <dbReference type="Rhea" id="RHEA:15469"/>
        <dbReference type="ChEBI" id="CHEBI:58435"/>
        <dbReference type="ChEBI" id="CHEBI:58525"/>
        <dbReference type="EC" id="5.3.1.16"/>
    </reaction>
</comment>
<comment type="pathway">
    <text evidence="1">Amino-acid biosynthesis; L-histidine biosynthesis; L-histidine from 5-phospho-alpha-D-ribose 1-diphosphate: step 4/9.</text>
</comment>
<comment type="subcellular location">
    <subcellularLocation>
        <location evidence="1">Cytoplasm</location>
    </subcellularLocation>
</comment>
<comment type="similarity">
    <text evidence="1">Belongs to the HisA/HisF family.</text>
</comment>
<dbReference type="EC" id="5.3.1.16" evidence="1"/>
<dbReference type="EMBL" id="CP000099">
    <property type="protein sequence ID" value="AAZ70274.1"/>
    <property type="molecule type" value="Genomic_DNA"/>
</dbReference>
<dbReference type="SMR" id="Q46CW8"/>
<dbReference type="STRING" id="269797.Mbar_A1311"/>
<dbReference type="PaxDb" id="269797-Mbar_A1311"/>
<dbReference type="KEGG" id="mba:Mbar_A1311"/>
<dbReference type="eggNOG" id="arCOG00618">
    <property type="taxonomic scope" value="Archaea"/>
</dbReference>
<dbReference type="HOGENOM" id="CLU_048577_1_1_2"/>
<dbReference type="OrthoDB" id="52866at2157"/>
<dbReference type="UniPathway" id="UPA00031">
    <property type="reaction ID" value="UER00009"/>
</dbReference>
<dbReference type="GO" id="GO:0005737">
    <property type="term" value="C:cytoplasm"/>
    <property type="evidence" value="ECO:0007669"/>
    <property type="project" value="UniProtKB-SubCell"/>
</dbReference>
<dbReference type="GO" id="GO:0003949">
    <property type="term" value="F:1-(5-phosphoribosyl)-5-[(5-phosphoribosylamino)methylideneamino]imidazole-4-carboxamide isomerase activity"/>
    <property type="evidence" value="ECO:0007669"/>
    <property type="project" value="UniProtKB-UniRule"/>
</dbReference>
<dbReference type="GO" id="GO:0000105">
    <property type="term" value="P:L-histidine biosynthetic process"/>
    <property type="evidence" value="ECO:0007669"/>
    <property type="project" value="UniProtKB-UniRule"/>
</dbReference>
<dbReference type="GO" id="GO:0000162">
    <property type="term" value="P:L-tryptophan biosynthetic process"/>
    <property type="evidence" value="ECO:0007669"/>
    <property type="project" value="TreeGrafter"/>
</dbReference>
<dbReference type="CDD" id="cd04732">
    <property type="entry name" value="HisA"/>
    <property type="match status" value="1"/>
</dbReference>
<dbReference type="FunFam" id="3.20.20.70:FF:000009">
    <property type="entry name" value="1-(5-phosphoribosyl)-5-[(5-phosphoribosylamino)methylideneamino] imidazole-4-carboxamide isomerase"/>
    <property type="match status" value="1"/>
</dbReference>
<dbReference type="Gene3D" id="3.20.20.70">
    <property type="entry name" value="Aldolase class I"/>
    <property type="match status" value="1"/>
</dbReference>
<dbReference type="HAMAP" id="MF_01014">
    <property type="entry name" value="HisA"/>
    <property type="match status" value="1"/>
</dbReference>
<dbReference type="InterPro" id="IPR013785">
    <property type="entry name" value="Aldolase_TIM"/>
</dbReference>
<dbReference type="InterPro" id="IPR006062">
    <property type="entry name" value="His_biosynth"/>
</dbReference>
<dbReference type="InterPro" id="IPR006063">
    <property type="entry name" value="HisA_bact_arch"/>
</dbReference>
<dbReference type="InterPro" id="IPR044524">
    <property type="entry name" value="Isoase_HisA-like"/>
</dbReference>
<dbReference type="InterPro" id="IPR023016">
    <property type="entry name" value="Isoase_HisA-like_bact"/>
</dbReference>
<dbReference type="InterPro" id="IPR011060">
    <property type="entry name" value="RibuloseP-bd_barrel"/>
</dbReference>
<dbReference type="NCBIfam" id="TIGR00007">
    <property type="entry name" value="1-(5-phosphoribosyl)-5-[(5-phosphoribosylamino)methylideneamino]imidazole-4-carboxamide isomerase"/>
    <property type="match status" value="1"/>
</dbReference>
<dbReference type="NCBIfam" id="NF010112">
    <property type="entry name" value="PRK13585.1"/>
    <property type="match status" value="1"/>
</dbReference>
<dbReference type="PANTHER" id="PTHR43090">
    <property type="entry name" value="1-(5-PHOSPHORIBOSYL)-5-[(5-PHOSPHORIBOSYLAMINO)METHYLIDENEAMINO] IMIDAZOLE-4-CARBOXAMIDE ISOMERASE"/>
    <property type="match status" value="1"/>
</dbReference>
<dbReference type="PANTHER" id="PTHR43090:SF7">
    <property type="entry name" value="1-(5-PHOSPHORIBOSYL)-5-[(5-PHOSPHORIBOSYLAMINO)METHYLIDENEAMINO] IMIDAZOLE-4-CARBOXAMIDE ISOMERASE"/>
    <property type="match status" value="1"/>
</dbReference>
<dbReference type="Pfam" id="PF00977">
    <property type="entry name" value="His_biosynth"/>
    <property type="match status" value="1"/>
</dbReference>
<dbReference type="SUPFAM" id="SSF51366">
    <property type="entry name" value="Ribulose-phoshate binding barrel"/>
    <property type="match status" value="1"/>
</dbReference>
<evidence type="ECO:0000255" key="1">
    <source>
        <dbReference type="HAMAP-Rule" id="MF_01014"/>
    </source>
</evidence>
<reference key="1">
    <citation type="journal article" date="2006" name="J. Bacteriol.">
        <title>The Methanosarcina barkeri genome: comparative analysis with Methanosarcina acetivorans and Methanosarcina mazei reveals extensive rearrangement within methanosarcinal genomes.</title>
        <authorList>
            <person name="Maeder D.L."/>
            <person name="Anderson I."/>
            <person name="Brettin T.S."/>
            <person name="Bruce D.C."/>
            <person name="Gilna P."/>
            <person name="Han C.S."/>
            <person name="Lapidus A."/>
            <person name="Metcalf W.W."/>
            <person name="Saunders E."/>
            <person name="Tapia R."/>
            <person name="Sowers K.R."/>
        </authorList>
    </citation>
    <scope>NUCLEOTIDE SEQUENCE [LARGE SCALE GENOMIC DNA]</scope>
    <source>
        <strain>Fusaro / DSM 804</strain>
    </source>
</reference>
<gene>
    <name evidence="1" type="primary">hisA</name>
    <name type="ordered locus">Mbar_A1311</name>
</gene>
<protein>
    <recommendedName>
        <fullName evidence="1">1-(5-phosphoribosyl)-5-[(5-phosphoribosylamino)methylideneamino] imidazole-4-carboxamide isomerase</fullName>
        <ecNumber evidence="1">5.3.1.16</ecNumber>
    </recommendedName>
    <alternativeName>
        <fullName evidence="1">Phosphoribosylformimino-5-aminoimidazole carboxamide ribotide isomerase</fullName>
    </alternativeName>
</protein>
<organism>
    <name type="scientific">Methanosarcina barkeri (strain Fusaro / DSM 804)</name>
    <dbReference type="NCBI Taxonomy" id="269797"/>
    <lineage>
        <taxon>Archaea</taxon>
        <taxon>Methanobacteriati</taxon>
        <taxon>Methanobacteriota</taxon>
        <taxon>Stenosarchaea group</taxon>
        <taxon>Methanomicrobia</taxon>
        <taxon>Methanosarcinales</taxon>
        <taxon>Methanosarcinaceae</taxon>
        <taxon>Methanosarcina</taxon>
    </lineage>
</organism>
<proteinExistence type="inferred from homology"/>
<sequence length="245" mass="25837">MVFEVIPAVDMRGGKCVQLVQGVPGSEIVSIDDPVEVALDWVRKGAKTLHLVDLDGAIEGERKNAPIIEKIVSACQKKGVQIQVGGGIRSFEDAASLLELGVSRVILGTAALKNPELVQQLSSTFGNEHVTVALDAKNGKISIKGWTEECAQTPVEMGRKFEELGAGSLLFTNIDTEGLMQGVNPVPTKNLVESVSIPVIASGGVSSLQDLRTLKKTGASGVVVGSALYTGRFTLEAAIETTQQE</sequence>
<keyword id="KW-0028">Amino-acid biosynthesis</keyword>
<keyword id="KW-0963">Cytoplasm</keyword>
<keyword id="KW-0368">Histidine biosynthesis</keyword>
<keyword id="KW-0413">Isomerase</keyword>